<feature type="chain" id="PRO_0000403361" description="Ubinuclein-2">
    <location>
        <begin position="1"/>
        <end position="1330"/>
    </location>
</feature>
<feature type="region of interest" description="Disordered" evidence="3">
    <location>
        <begin position="1"/>
        <end position="133"/>
    </location>
</feature>
<feature type="region of interest" description="Disordered" evidence="3">
    <location>
        <begin position="249"/>
        <end position="304"/>
    </location>
</feature>
<feature type="region of interest" description="Disordered" evidence="3">
    <location>
        <begin position="336"/>
        <end position="356"/>
    </location>
</feature>
<feature type="region of interest" description="Disordered" evidence="3">
    <location>
        <begin position="574"/>
        <end position="597"/>
    </location>
</feature>
<feature type="region of interest" description="Disordered" evidence="3">
    <location>
        <begin position="672"/>
        <end position="730"/>
    </location>
</feature>
<feature type="region of interest" description="Disordered" evidence="3">
    <location>
        <begin position="802"/>
        <end position="833"/>
    </location>
</feature>
<feature type="region of interest" description="Disordered" evidence="3">
    <location>
        <begin position="864"/>
        <end position="913"/>
    </location>
</feature>
<feature type="region of interest" description="Disordered" evidence="3">
    <location>
        <begin position="938"/>
        <end position="988"/>
    </location>
</feature>
<feature type="region of interest" description="Disordered" evidence="3">
    <location>
        <begin position="1017"/>
        <end position="1201"/>
    </location>
</feature>
<feature type="region of interest" description="Disordered" evidence="3">
    <location>
        <begin position="1308"/>
        <end position="1330"/>
    </location>
</feature>
<feature type="compositionally biased region" description="Basic and acidic residues" evidence="3">
    <location>
        <begin position="16"/>
        <end position="37"/>
    </location>
</feature>
<feature type="compositionally biased region" description="Basic and acidic residues" evidence="3">
    <location>
        <begin position="67"/>
        <end position="79"/>
    </location>
</feature>
<feature type="compositionally biased region" description="Pro residues" evidence="3">
    <location>
        <begin position="93"/>
        <end position="111"/>
    </location>
</feature>
<feature type="compositionally biased region" description="Basic and acidic residues" evidence="3">
    <location>
        <begin position="123"/>
        <end position="133"/>
    </location>
</feature>
<feature type="compositionally biased region" description="Polar residues" evidence="3">
    <location>
        <begin position="345"/>
        <end position="356"/>
    </location>
</feature>
<feature type="compositionally biased region" description="Basic and acidic residues" evidence="3">
    <location>
        <begin position="575"/>
        <end position="585"/>
    </location>
</feature>
<feature type="compositionally biased region" description="Basic and acidic residues" evidence="3">
    <location>
        <begin position="688"/>
        <end position="699"/>
    </location>
</feature>
<feature type="compositionally biased region" description="Low complexity" evidence="3">
    <location>
        <begin position="701"/>
        <end position="730"/>
    </location>
</feature>
<feature type="compositionally biased region" description="Polar residues" evidence="3">
    <location>
        <begin position="807"/>
        <end position="816"/>
    </location>
</feature>
<feature type="compositionally biased region" description="Low complexity" evidence="3">
    <location>
        <begin position="864"/>
        <end position="895"/>
    </location>
</feature>
<feature type="compositionally biased region" description="Polar residues" evidence="3">
    <location>
        <begin position="896"/>
        <end position="913"/>
    </location>
</feature>
<feature type="compositionally biased region" description="Polar residues" evidence="3">
    <location>
        <begin position="938"/>
        <end position="956"/>
    </location>
</feature>
<feature type="compositionally biased region" description="Low complexity" evidence="3">
    <location>
        <begin position="1017"/>
        <end position="1029"/>
    </location>
</feature>
<feature type="compositionally biased region" description="Pro residues" evidence="3">
    <location>
        <begin position="1030"/>
        <end position="1044"/>
    </location>
</feature>
<feature type="compositionally biased region" description="Low complexity" evidence="3">
    <location>
        <begin position="1045"/>
        <end position="1054"/>
    </location>
</feature>
<feature type="compositionally biased region" description="Low complexity" evidence="3">
    <location>
        <begin position="1061"/>
        <end position="1079"/>
    </location>
</feature>
<feature type="compositionally biased region" description="Polar residues" evidence="3">
    <location>
        <begin position="1082"/>
        <end position="1148"/>
    </location>
</feature>
<feature type="compositionally biased region" description="Polar residues" evidence="3">
    <location>
        <begin position="1158"/>
        <end position="1169"/>
    </location>
</feature>
<feature type="compositionally biased region" description="Polar residues" evidence="3">
    <location>
        <begin position="1308"/>
        <end position="1317"/>
    </location>
</feature>
<feature type="compositionally biased region" description="Basic and acidic residues" evidence="3">
    <location>
        <begin position="1321"/>
        <end position="1330"/>
    </location>
</feature>
<feature type="modified residue" description="Phosphoserine" evidence="1">
    <location>
        <position position="13"/>
    </location>
</feature>
<feature type="modified residue" description="Phosphothreonine" evidence="1">
    <location>
        <position position="244"/>
    </location>
</feature>
<feature type="modified residue" description="Phosphoserine" evidence="1">
    <location>
        <position position="251"/>
    </location>
</feature>
<feature type="modified residue" description="Phosphothreonine" evidence="1">
    <location>
        <position position="253"/>
    </location>
</feature>
<feature type="modified residue" description="Phosphoserine" evidence="1">
    <location>
        <position position="312"/>
    </location>
</feature>
<feature type="modified residue" description="Phosphoserine" evidence="2">
    <location>
        <position position="417"/>
    </location>
</feature>
<feature type="modified residue" description="Phosphoserine" evidence="2">
    <location>
        <position position="420"/>
    </location>
</feature>
<feature type="modified residue" description="Phosphoserine" evidence="2">
    <location>
        <position position="423"/>
    </location>
</feature>
<feature type="modified residue" description="Phosphoserine" evidence="1">
    <location>
        <position position="585"/>
    </location>
</feature>
<feature type="modified residue" description="N6-acetyllysine" evidence="2">
    <location>
        <position position="1052"/>
    </location>
</feature>
<feature type="modified residue" description="Phosphoserine" evidence="1">
    <location>
        <position position="1107"/>
    </location>
</feature>
<feature type="modified residue" description="N6-acetyllysine" evidence="1">
    <location>
        <position position="1132"/>
    </location>
</feature>
<feature type="cross-link" description="Glycyl lysine isopeptide (Lys-Gly) (interchain with G-Cter in SUMO2)" evidence="1">
    <location>
        <position position="273"/>
    </location>
</feature>
<sequence>MAEPRRVAFISLSPVRRREAEFPGTEREPEYPREPPRLEPQPYREPARTEPPAPREVAPRSDAQPPPREKPLPQREVSRAEPPMSLQREPPRPEPPPPPLPQLHLQPPPPRESTSRAEPQPRPPRETVRLELVLKDPTDESCVEFSYPELLLCGEQRKKPVYTEDPFNDDHQERQEVEMLAKKFEMKYGGKPRKHRRDRLQDLIDIGFGYDETDPFIDNSEAYDELVPASLTTKYGGFYINTGTLQFRQASDTEEDDTTDNQKHKPPKIPKIKEDDIEMKKRKRKEEGEKEKKPRKKVPKQLGVMALNSHKSEKKKKRYKDSLSLAAMIRKFQKEKDALKKESNPKTPLNFSTSSLNKPPSAAVALGNDVSDLNLTSADPDLPIFVSTNEHELFQEAENALEMLDDFDFDRLLDAASNGSPLSESGGENGNTTQPTYASQVMPKVVPTLPEGLPVLLEKRIEDLRVAAKLFDEEGRKKFFTQDMNNILLDIELQLQELGPVIRSGVYSHLEAFVPCNKETLVKRLKKLHLNVQDDRLREPLQKLKLAVSNVMPEQLFKYQEDCQARNQAKCAKFQTDEEREKNGSEEDDEEKPGKRVIGPRKKFHWDDTIRTLLCNLVEIKLGCYELEPNKSQSAEDYLKSFMETEVKPLWPKGWMQARMLFKESRSVHNHLTSAPAKKKVIPAPKPKVKECSPKKDQKTPASSVASVGGPSTSSSTSAVASTSSGSTPVQETICLDDSLDEELSFHPPALDLVSEALAVINNGNKGPPAGSRISMPTAKPRPGLREEKLASIMSKLPLATPKKLDSTQTAHSSSLIAGHTGPVPKKPQDLAHTGISSGLIAGSSIQNPKVSLEPLPARLLQQGLQRSSQIHASSSSQTHVSSSSQAQVAASSHTLGTSEAQDASPLTQVTKVHQHSAVQQNYVSPLQATISKSQTNPVVKLSNNPQLSCSSPLTKTSDKPLMYRLPLSTPPPGNGSQGSHSLVSRTVPSTTTSTNYLAKAMVSQISTQGFKSPFSMAASPKLASSPKPATSPKPLPSPKPSASPKPSQSAKPSVSTKLISKSNPTPKPTVSPSSSSPNALVAQSSHSSSNNPVHKQPSGMNISRQSPTLNLLPLNRTSGLPSTKNLQAPSKLTNSPSTGTVGKNSLSGIAMNVPASRGSNLNSSGANRTSLSGGTGSGTQGATKPLSTPHRPSSASGSSVVAASVQSTAGASLLANASPLTLMTSPLSVTNQNVTPFGMLGGLVPVTMPFQFPLELLGFGTDTAGVTTTSGSTSAAFHHSLTQNLLKGLQPGAQHAAALSHAPLPTHVQQTFNDGGQSKGDTKLPRKSQ</sequence>
<evidence type="ECO:0000250" key="1">
    <source>
        <dbReference type="UniProtKB" id="Q6ZU65"/>
    </source>
</evidence>
<evidence type="ECO:0000250" key="2">
    <source>
        <dbReference type="UniProtKB" id="Q80WC1"/>
    </source>
</evidence>
<evidence type="ECO:0000256" key="3">
    <source>
        <dbReference type="SAM" id="MobiDB-lite"/>
    </source>
</evidence>
<evidence type="ECO:0000305" key="4"/>
<keyword id="KW-0007">Acetylation</keyword>
<keyword id="KW-1017">Isopeptide bond</keyword>
<keyword id="KW-0597">Phosphoprotein</keyword>
<keyword id="KW-1185">Reference proteome</keyword>
<keyword id="KW-0832">Ubl conjugation</keyword>
<dbReference type="EMBL" id="AAFC03010356">
    <property type="status" value="NOT_ANNOTATED_CDS"/>
    <property type="molecule type" value="Genomic_DNA"/>
</dbReference>
<dbReference type="EMBL" id="AAFC03010357">
    <property type="status" value="NOT_ANNOTATED_CDS"/>
    <property type="molecule type" value="Genomic_DNA"/>
</dbReference>
<dbReference type="EMBL" id="AAFC03080283">
    <property type="status" value="NOT_ANNOTATED_CDS"/>
    <property type="molecule type" value="Genomic_DNA"/>
</dbReference>
<dbReference type="RefSeq" id="XP_005205927.1">
    <property type="nucleotide sequence ID" value="XM_005205870.5"/>
</dbReference>
<dbReference type="SMR" id="E1B7L7"/>
<dbReference type="FunCoup" id="E1B7L7">
    <property type="interactions" value="2331"/>
</dbReference>
<dbReference type="STRING" id="9913.ENSBTAP00000005889"/>
<dbReference type="PaxDb" id="9913-ENSBTAP00000005889"/>
<dbReference type="Ensembl" id="ENSBTAT00000076117.2">
    <property type="protein sequence ID" value="ENSBTAP00000060636.2"/>
    <property type="gene ID" value="ENSBTAG00000014021.6"/>
</dbReference>
<dbReference type="GeneID" id="540792"/>
<dbReference type="CTD" id="254048"/>
<dbReference type="VGNC" id="VGNC:36611">
    <property type="gene designation" value="UBN2"/>
</dbReference>
<dbReference type="eggNOG" id="KOG4786">
    <property type="taxonomic scope" value="Eukaryota"/>
</dbReference>
<dbReference type="GeneTree" id="ENSGT00940000155858"/>
<dbReference type="HOGENOM" id="CLU_007400_1_0_1"/>
<dbReference type="InParanoid" id="E1B7L7"/>
<dbReference type="OrthoDB" id="68076at2759"/>
<dbReference type="Proteomes" id="UP000009136">
    <property type="component" value="Chromosome 4"/>
</dbReference>
<dbReference type="GO" id="GO:0005634">
    <property type="term" value="C:nucleus"/>
    <property type="evidence" value="ECO:0000318"/>
    <property type="project" value="GO_Central"/>
</dbReference>
<dbReference type="GO" id="GO:0006325">
    <property type="term" value="P:chromatin organization"/>
    <property type="evidence" value="ECO:0000318"/>
    <property type="project" value="GO_Central"/>
</dbReference>
<dbReference type="InterPro" id="IPR014840">
    <property type="entry name" value="HRD"/>
</dbReference>
<dbReference type="InterPro" id="IPR026947">
    <property type="entry name" value="UBN_middle_dom"/>
</dbReference>
<dbReference type="PANTHER" id="PTHR21669">
    <property type="entry name" value="CAPZ-INTERACTING PROTEIN AND RELATED PROTEINS"/>
    <property type="match status" value="1"/>
</dbReference>
<dbReference type="PANTHER" id="PTHR21669:SF10">
    <property type="entry name" value="UBINUCLEIN-2"/>
    <property type="match status" value="1"/>
</dbReference>
<dbReference type="Pfam" id="PF08729">
    <property type="entry name" value="HUN"/>
    <property type="match status" value="1"/>
</dbReference>
<dbReference type="Pfam" id="PF14075">
    <property type="entry name" value="UBN_AB"/>
    <property type="match status" value="1"/>
</dbReference>
<gene>
    <name type="primary">UBN2</name>
</gene>
<accession>E1B7L7</accession>
<organism>
    <name type="scientific">Bos taurus</name>
    <name type="common">Bovine</name>
    <dbReference type="NCBI Taxonomy" id="9913"/>
    <lineage>
        <taxon>Eukaryota</taxon>
        <taxon>Metazoa</taxon>
        <taxon>Chordata</taxon>
        <taxon>Craniata</taxon>
        <taxon>Vertebrata</taxon>
        <taxon>Euteleostomi</taxon>
        <taxon>Mammalia</taxon>
        <taxon>Eutheria</taxon>
        <taxon>Laurasiatheria</taxon>
        <taxon>Artiodactyla</taxon>
        <taxon>Ruminantia</taxon>
        <taxon>Pecora</taxon>
        <taxon>Bovidae</taxon>
        <taxon>Bovinae</taxon>
        <taxon>Bos</taxon>
    </lineage>
</organism>
<proteinExistence type="inferred from homology"/>
<protein>
    <recommendedName>
        <fullName>Ubinuclein-2</fullName>
    </recommendedName>
</protein>
<name>UBN2_BOVIN</name>
<reference key="1">
    <citation type="journal article" date="2009" name="Science">
        <title>The genome sequence of taurine cattle: a window to ruminant biology and evolution.</title>
        <authorList>
            <consortium name="The bovine genome sequencing and analysis consortium"/>
        </authorList>
    </citation>
    <scope>NUCLEOTIDE SEQUENCE [LARGE SCALE GENOMIC DNA]</scope>
    <source>
        <strain>Hereford</strain>
    </source>
</reference>
<comment type="similarity">
    <text evidence="4">Belongs to the ubinuclein family.</text>
</comment>